<name>AAS_PECAS</name>
<accession>Q6D107</accession>
<dbReference type="EC" id="2.3.1.40" evidence="1"/>
<dbReference type="EC" id="6.2.1.20" evidence="1"/>
<dbReference type="EMBL" id="BX950851">
    <property type="protein sequence ID" value="CAG76539.1"/>
    <property type="molecule type" value="Genomic_DNA"/>
</dbReference>
<dbReference type="RefSeq" id="WP_011095142.1">
    <property type="nucleotide sequence ID" value="NC_004547.2"/>
</dbReference>
<dbReference type="SMR" id="Q6D107"/>
<dbReference type="STRING" id="218491.ECA3641"/>
<dbReference type="KEGG" id="eca:ECA3641"/>
<dbReference type="PATRIC" id="fig|218491.5.peg.3694"/>
<dbReference type="eggNOG" id="COG0204">
    <property type="taxonomic scope" value="Bacteria"/>
</dbReference>
<dbReference type="eggNOG" id="COG0318">
    <property type="taxonomic scope" value="Bacteria"/>
</dbReference>
<dbReference type="HOGENOM" id="CLU_000022_59_8_6"/>
<dbReference type="OrthoDB" id="9803968at2"/>
<dbReference type="Proteomes" id="UP000007966">
    <property type="component" value="Chromosome"/>
</dbReference>
<dbReference type="GO" id="GO:0005886">
    <property type="term" value="C:plasma membrane"/>
    <property type="evidence" value="ECO:0007669"/>
    <property type="project" value="UniProtKB-SubCell"/>
</dbReference>
<dbReference type="GO" id="GO:0008779">
    <property type="term" value="F:acyl-[acyl-carrier-protein]-phospholipid O-acyltransferase activity"/>
    <property type="evidence" value="ECO:0007669"/>
    <property type="project" value="UniProtKB-UniRule"/>
</dbReference>
<dbReference type="GO" id="GO:0005524">
    <property type="term" value="F:ATP binding"/>
    <property type="evidence" value="ECO:0007669"/>
    <property type="project" value="UniProtKB-KW"/>
</dbReference>
<dbReference type="GO" id="GO:0008922">
    <property type="term" value="F:long-chain fatty acid [acyl-carrier-protein] ligase activity"/>
    <property type="evidence" value="ECO:0007669"/>
    <property type="project" value="UniProtKB-UniRule"/>
</dbReference>
<dbReference type="GO" id="GO:0031956">
    <property type="term" value="F:medium-chain fatty acid-CoA ligase activity"/>
    <property type="evidence" value="ECO:0007669"/>
    <property type="project" value="TreeGrafter"/>
</dbReference>
<dbReference type="GO" id="GO:0006631">
    <property type="term" value="P:fatty acid metabolic process"/>
    <property type="evidence" value="ECO:0007669"/>
    <property type="project" value="InterPro"/>
</dbReference>
<dbReference type="GO" id="GO:0008654">
    <property type="term" value="P:phospholipid biosynthetic process"/>
    <property type="evidence" value="ECO:0007669"/>
    <property type="project" value="InterPro"/>
</dbReference>
<dbReference type="CDD" id="cd07989">
    <property type="entry name" value="LPLAT_AGPAT-like"/>
    <property type="match status" value="1"/>
</dbReference>
<dbReference type="Gene3D" id="3.30.300.30">
    <property type="match status" value="1"/>
</dbReference>
<dbReference type="Gene3D" id="3.40.50.12780">
    <property type="entry name" value="N-terminal domain of ligase-like"/>
    <property type="match status" value="1"/>
</dbReference>
<dbReference type="HAMAP" id="MF_01162">
    <property type="entry name" value="Aas"/>
    <property type="match status" value="1"/>
</dbReference>
<dbReference type="InterPro" id="IPR023775">
    <property type="entry name" value="Aas"/>
</dbReference>
<dbReference type="InterPro" id="IPR045851">
    <property type="entry name" value="AMP-bd_C_sf"/>
</dbReference>
<dbReference type="InterPro" id="IPR020845">
    <property type="entry name" value="AMP-binding_CS"/>
</dbReference>
<dbReference type="InterPro" id="IPR000873">
    <property type="entry name" value="AMP-dep_synth/lig_dom"/>
</dbReference>
<dbReference type="InterPro" id="IPR042099">
    <property type="entry name" value="ANL_N_sf"/>
</dbReference>
<dbReference type="InterPro" id="IPR002123">
    <property type="entry name" value="Plipid/glycerol_acylTrfase"/>
</dbReference>
<dbReference type="NCBIfam" id="NF005959">
    <property type="entry name" value="PRK08043.1"/>
    <property type="match status" value="1"/>
</dbReference>
<dbReference type="PANTHER" id="PTHR43201">
    <property type="entry name" value="ACYL-COA SYNTHETASE"/>
    <property type="match status" value="1"/>
</dbReference>
<dbReference type="PANTHER" id="PTHR43201:SF8">
    <property type="entry name" value="ACYL-COA SYNTHETASE FAMILY MEMBER 3"/>
    <property type="match status" value="1"/>
</dbReference>
<dbReference type="Pfam" id="PF01553">
    <property type="entry name" value="Acyltransferase"/>
    <property type="match status" value="1"/>
</dbReference>
<dbReference type="Pfam" id="PF00501">
    <property type="entry name" value="AMP-binding"/>
    <property type="match status" value="1"/>
</dbReference>
<dbReference type="SMART" id="SM00563">
    <property type="entry name" value="PlsC"/>
    <property type="match status" value="1"/>
</dbReference>
<dbReference type="SUPFAM" id="SSF56801">
    <property type="entry name" value="Acetyl-CoA synthetase-like"/>
    <property type="match status" value="1"/>
</dbReference>
<dbReference type="SUPFAM" id="SSF69593">
    <property type="entry name" value="Glycerol-3-phosphate (1)-acyltransferase"/>
    <property type="match status" value="1"/>
</dbReference>
<dbReference type="PROSITE" id="PS00455">
    <property type="entry name" value="AMP_BINDING"/>
    <property type="match status" value="1"/>
</dbReference>
<comment type="function">
    <text evidence="1">Plays a role in lysophospholipid acylation. Transfers fatty acids to the 1-position via an enzyme-bound acyl-ACP intermediate in the presence of ATP and magnesium. Its physiological function is to regenerate phosphatidylethanolamine from 2-acyl-glycero-3-phosphoethanolamine (2-acyl-GPE) formed by transacylation reactions or degradation by phospholipase A1.</text>
</comment>
<comment type="catalytic activity">
    <reaction evidence="1">
        <text>a 2-acyl-sn-glycero-3-phosphoethanolamine + a fatty acyl-[ACP] = a 1,2-diacyl-sn-glycero-3-phosphoethanolamine + holo-[ACP]</text>
        <dbReference type="Rhea" id="RHEA:10304"/>
        <dbReference type="Rhea" id="RHEA-COMP:9685"/>
        <dbReference type="Rhea" id="RHEA-COMP:14125"/>
        <dbReference type="ChEBI" id="CHEBI:64479"/>
        <dbReference type="ChEBI" id="CHEBI:64612"/>
        <dbReference type="ChEBI" id="CHEBI:65213"/>
        <dbReference type="ChEBI" id="CHEBI:138651"/>
        <dbReference type="EC" id="2.3.1.40"/>
    </reaction>
</comment>
<comment type="catalytic activity">
    <reaction evidence="1">
        <text>a long-chain fatty acid + holo-[ACP] + ATP = a long-chain fatty acyl-[ACP] + AMP + diphosphate</text>
        <dbReference type="Rhea" id="RHEA:45588"/>
        <dbReference type="Rhea" id="RHEA-COMP:9685"/>
        <dbReference type="Rhea" id="RHEA-COMP:12682"/>
        <dbReference type="ChEBI" id="CHEBI:30616"/>
        <dbReference type="ChEBI" id="CHEBI:33019"/>
        <dbReference type="ChEBI" id="CHEBI:57560"/>
        <dbReference type="ChEBI" id="CHEBI:64479"/>
        <dbReference type="ChEBI" id="CHEBI:133243"/>
        <dbReference type="ChEBI" id="CHEBI:456215"/>
        <dbReference type="EC" id="6.2.1.20"/>
    </reaction>
</comment>
<comment type="subcellular location">
    <subcellularLocation>
        <location evidence="1">Cell inner membrane</location>
        <topology evidence="1">Multi-pass membrane protein</topology>
    </subcellularLocation>
</comment>
<comment type="similarity">
    <text evidence="1">In the N-terminal section; belongs to the 2-acyl-GPE acetyltransferase family.</text>
</comment>
<comment type="similarity">
    <text evidence="1">In the C-terminal section; belongs to the ATP-dependent AMP-binding enzyme family.</text>
</comment>
<evidence type="ECO:0000255" key="1">
    <source>
        <dbReference type="HAMAP-Rule" id="MF_01162"/>
    </source>
</evidence>
<organism>
    <name type="scientific">Pectobacterium atrosepticum (strain SCRI 1043 / ATCC BAA-672)</name>
    <name type="common">Erwinia carotovora subsp. atroseptica</name>
    <dbReference type="NCBI Taxonomy" id="218491"/>
    <lineage>
        <taxon>Bacteria</taxon>
        <taxon>Pseudomonadati</taxon>
        <taxon>Pseudomonadota</taxon>
        <taxon>Gammaproteobacteria</taxon>
        <taxon>Enterobacterales</taxon>
        <taxon>Pectobacteriaceae</taxon>
        <taxon>Pectobacterium</taxon>
    </lineage>
</organism>
<keyword id="KW-0012">Acyltransferase</keyword>
<keyword id="KW-0067">ATP-binding</keyword>
<keyword id="KW-0997">Cell inner membrane</keyword>
<keyword id="KW-1003">Cell membrane</keyword>
<keyword id="KW-0436">Ligase</keyword>
<keyword id="KW-0472">Membrane</keyword>
<keyword id="KW-0511">Multifunctional enzyme</keyword>
<keyword id="KW-0547">Nucleotide-binding</keyword>
<keyword id="KW-1185">Reference proteome</keyword>
<keyword id="KW-0808">Transferase</keyword>
<keyword id="KW-0812">Transmembrane</keyword>
<keyword id="KW-1133">Transmembrane helix</keyword>
<gene>
    <name evidence="1" type="primary">aas</name>
    <name type="ordered locus">ECA3641</name>
</gene>
<feature type="chain" id="PRO_0000193049" description="Bifunctional protein Aas">
    <location>
        <begin position="1"/>
        <end position="738"/>
    </location>
</feature>
<feature type="transmembrane region" description="Helical" evidence="1">
    <location>
        <begin position="258"/>
        <end position="277"/>
    </location>
</feature>
<feature type="transmembrane region" description="Helical" evidence="1">
    <location>
        <begin position="409"/>
        <end position="433"/>
    </location>
</feature>
<feature type="region of interest" description="Acyltransferase">
    <location>
        <begin position="15"/>
        <end position="138"/>
    </location>
</feature>
<feature type="region of interest" description="AMP-binding">
    <location>
        <begin position="233"/>
        <end position="646"/>
    </location>
</feature>
<feature type="active site" evidence="1">
    <location>
        <position position="36"/>
    </location>
</feature>
<protein>
    <recommendedName>
        <fullName evidence="1">Bifunctional protein Aas</fullName>
    </recommendedName>
    <domain>
        <recommendedName>
            <fullName evidence="1">2-acylglycerophosphoethanolamine acyltransferase</fullName>
            <ecNumber evidence="1">2.3.1.40</ecNumber>
        </recommendedName>
        <alternativeName>
            <fullName evidence="1">2-acyl-GPE acyltransferase</fullName>
        </alternativeName>
        <alternativeName>
            <fullName evidence="1">Acyl-[acyl-carrier-protein]--phospholipid O-acyltransferase</fullName>
        </alternativeName>
    </domain>
    <domain>
        <recommendedName>
            <fullName evidence="1">Acyl-[acyl-carrier-protein] synthetase</fullName>
            <ecNumber evidence="1">6.2.1.20</ecNumber>
        </recommendedName>
        <alternativeName>
            <fullName evidence="1">Acyl-ACP synthetase</fullName>
        </alternativeName>
        <alternativeName>
            <fullName evidence="1">Long-chain-fatty-acid--[acyl-carrier-protein] ligase</fullName>
        </alternativeName>
    </domain>
</protein>
<sequence length="738" mass="81428">MIHTLLRWVFQRLYRIRIEGDSSQFQQSKLLITPNHVSFLDGVLLALFLPIKPVFAVYSSISDRWFMRWLKPYIDFVPLDPTKPLAIKGLIKVIERGQPVVVFPEGRISVTGSLMKVYSGAAFVAAKSGATIIPVRIDGIELSPFGRLAGVFKRRCLPQVTITYLPPTTLPMPEASSARARRALAGERLHQIMMKARMETRPQHTLYQAFLAARSRYGRHSASIADISFNEDSYQGLLKKSLGVSRILQRFTRADEHVGMLLPNATITAASILGASLRNRIPAMLNYTAGAKGLQSAMKAAGIKTIVTSRQFLEKGKLTDLPKQVSEANWVYLEDLKDTVTLKDKLWILFHLLFPARAMLPQKPDDAAIVLFTSGSEGNPKGVVHSHDSLLANVEQIRTVADFTPGDRFMSALPLFHAFGLTVGLLTPLITGARVFLYPSPLHYRIVPELVYDQNCTVLFGTSTFLGNYARFAHPYDFARLRYVVAGAEKLSETTRQVWQDKFGIRILEGYGVTECAPVVAINVPMATKIHSVGLLLPEMESRLITVPGITRGGRLQLRGPNIMKGYLRVENPGVLETPAAENAEGELQQGWYDTGDIVELDERGFCTIIGRVKRFAKLAGEMVSLESVEQLAVKVSPEAQHAASAKSDSSKGEALVLFTTDSQITRDVLLAQARSSGVPELAVPRDIRYVKALPLLGSGKPDFVTLRQMAEEPNSEQSVIEPSIVKQPITNASEPSA</sequence>
<reference key="1">
    <citation type="journal article" date="2004" name="Proc. Natl. Acad. Sci. U.S.A.">
        <title>Genome sequence of the enterobacterial phytopathogen Erwinia carotovora subsp. atroseptica and characterization of virulence factors.</title>
        <authorList>
            <person name="Bell K.S."/>
            <person name="Sebaihia M."/>
            <person name="Pritchard L."/>
            <person name="Holden M.T.G."/>
            <person name="Hyman L.J."/>
            <person name="Holeva M.C."/>
            <person name="Thomson N.R."/>
            <person name="Bentley S.D."/>
            <person name="Churcher L.J.C."/>
            <person name="Mungall K."/>
            <person name="Atkin R."/>
            <person name="Bason N."/>
            <person name="Brooks K."/>
            <person name="Chillingworth T."/>
            <person name="Clark K."/>
            <person name="Doggett J."/>
            <person name="Fraser A."/>
            <person name="Hance Z."/>
            <person name="Hauser H."/>
            <person name="Jagels K."/>
            <person name="Moule S."/>
            <person name="Norbertczak H."/>
            <person name="Ormond D."/>
            <person name="Price C."/>
            <person name="Quail M.A."/>
            <person name="Sanders M."/>
            <person name="Walker D."/>
            <person name="Whitehead S."/>
            <person name="Salmond G.P.C."/>
            <person name="Birch P.R.J."/>
            <person name="Parkhill J."/>
            <person name="Toth I.K."/>
        </authorList>
    </citation>
    <scope>NUCLEOTIDE SEQUENCE [LARGE SCALE GENOMIC DNA]</scope>
    <source>
        <strain>SCRI 1043 / ATCC BAA-672</strain>
    </source>
</reference>
<proteinExistence type="inferred from homology"/>